<reference key="1">
    <citation type="journal article" date="1995" name="Nucleic Acids Res.">
        <title>Analysis of the Escherichia coli genome VI: DNA sequence of the region from 92.8 through 100 minutes.</title>
        <authorList>
            <person name="Burland V.D."/>
            <person name="Plunkett G. III"/>
            <person name="Sofia H.J."/>
            <person name="Daniels D.L."/>
            <person name="Blattner F.R."/>
        </authorList>
    </citation>
    <scope>NUCLEOTIDE SEQUENCE [LARGE SCALE GENOMIC DNA]</scope>
    <source>
        <strain>K12 / MG1655 / ATCC 47076</strain>
    </source>
</reference>
<reference key="2">
    <citation type="journal article" date="1997" name="Science">
        <title>The complete genome sequence of Escherichia coli K-12.</title>
        <authorList>
            <person name="Blattner F.R."/>
            <person name="Plunkett G. III"/>
            <person name="Bloch C.A."/>
            <person name="Perna N.T."/>
            <person name="Burland V."/>
            <person name="Riley M."/>
            <person name="Collado-Vides J."/>
            <person name="Glasner J.D."/>
            <person name="Rode C.K."/>
            <person name="Mayhew G.F."/>
            <person name="Gregor J."/>
            <person name="Davis N.W."/>
            <person name="Kirkpatrick H.A."/>
            <person name="Goeden M.A."/>
            <person name="Rose D.J."/>
            <person name="Mau B."/>
            <person name="Shao Y."/>
        </authorList>
    </citation>
    <scope>NUCLEOTIDE SEQUENCE [LARGE SCALE GENOMIC DNA]</scope>
    <source>
        <strain>K12 / MG1655 / ATCC 47076</strain>
    </source>
</reference>
<reference key="3">
    <citation type="journal article" date="2006" name="Mol. Syst. Biol.">
        <title>Highly accurate genome sequences of Escherichia coli K-12 strains MG1655 and W3110.</title>
        <authorList>
            <person name="Hayashi K."/>
            <person name="Morooka N."/>
            <person name="Yamamoto Y."/>
            <person name="Fujita K."/>
            <person name="Isono K."/>
            <person name="Choi S."/>
            <person name="Ohtsubo E."/>
            <person name="Baba T."/>
            <person name="Wanner B.L."/>
            <person name="Mori H."/>
            <person name="Horiuchi T."/>
        </authorList>
    </citation>
    <scope>NUCLEOTIDE SEQUENCE [LARGE SCALE GENOMIC DNA]</scope>
    <source>
        <strain>K12 / W3110 / ATCC 27325 / DSM 5911</strain>
    </source>
</reference>
<reference key="4">
    <citation type="journal article" date="1982" name="EMBO J.">
        <title>Homologous control sites and DNA transcription starts in the related argF and argI genes of Escherichia coli K12.</title>
        <authorList>
            <person name="Piette J."/>
            <person name="Cunin R."/>
            <person name="van Vliet F."/>
            <person name="Charlier D.R.M."/>
            <person name="Crabeel M."/>
            <person name="Ota Y."/>
            <person name="Glansdorff N."/>
        </authorList>
    </citation>
    <scope>NUCLEOTIDE SEQUENCE [GENOMIC DNA] OF 1-19</scope>
</reference>
<reference key="5">
    <citation type="journal article" date="1993" name="J. Bacteriol.">
        <title>Isolation of the gene (miaE) encoding the hydroxylase involved in the synthesis of 2-methylthio-cis-ribozeatin in tRNA of Salmonella typhimurium and characterization of mutants.</title>
        <authorList>
            <person name="Persson B.C."/>
            <person name="Bjoerk G.R."/>
        </authorList>
    </citation>
    <scope>IDENTIFICATION</scope>
</reference>
<reference key="6">
    <citation type="journal article" date="2006" name="Mol. Microbiol.">
        <title>Differential modulation of E. coli mRNA abundance by inhibitory proteins that alter the composition of the degradosome.</title>
        <authorList>
            <person name="Gao J."/>
            <person name="Lee K."/>
            <person name="Zhao M."/>
            <person name="Qiu J."/>
            <person name="Zhan X."/>
            <person name="Saxena A."/>
            <person name="Moore C.J."/>
            <person name="Cohen S.N."/>
            <person name="Georgiou G."/>
        </authorList>
    </citation>
    <scope>FUNCTION</scope>
    <scope>INTERACTION WITH RNE</scope>
    <source>
        <strain>K12</strain>
    </source>
</reference>
<reference key="7">
    <citation type="journal article" date="2008" name="FEMS Microbiol. Lett.">
        <title>Inhibitory effects of RraA and RraB on RNAse E-related enzymes imply conserved functions in the regulated enzymatic cleavage of RNA.</title>
        <authorList>
            <person name="Yeom J.H."/>
            <person name="Go H."/>
            <person name="Shin E."/>
            <person name="Kim H.L."/>
            <person name="Han S.H."/>
            <person name="Moore C.J."/>
            <person name="Bae J."/>
            <person name="Lee K."/>
        </authorList>
    </citation>
    <scope>FUNCTION</scope>
</reference>
<reference key="8">
    <citation type="journal article" date="2009" name="J. Bacteriol.">
        <title>Transcriptional regulation of the Escherichia coli gene rraB, encoding a protein inhibitor of RNase E.</title>
        <authorList>
            <person name="Zhou L."/>
            <person name="Zhao M."/>
            <person name="Wolf R.Z."/>
            <person name="Graham D.E."/>
            <person name="Georgiou G."/>
        </authorList>
    </citation>
    <scope>INDUCTION</scope>
    <source>
        <strain>K12</strain>
    </source>
</reference>
<dbReference type="EMBL" id="U14003">
    <property type="protein sequence ID" value="AAA97151.1"/>
    <property type="molecule type" value="Genomic_DNA"/>
</dbReference>
<dbReference type="EMBL" id="U00096">
    <property type="protein sequence ID" value="AAC77212.1"/>
    <property type="molecule type" value="Genomic_DNA"/>
</dbReference>
<dbReference type="EMBL" id="AP009048">
    <property type="protein sequence ID" value="BAE78252.1"/>
    <property type="molecule type" value="Genomic_DNA"/>
</dbReference>
<dbReference type="EMBL" id="M24186">
    <property type="status" value="NOT_ANNOTATED_CDS"/>
    <property type="molecule type" value="Genomic_DNA"/>
</dbReference>
<dbReference type="PIR" id="S56480">
    <property type="entry name" value="S56480"/>
</dbReference>
<dbReference type="RefSeq" id="NP_418676.1">
    <property type="nucleotide sequence ID" value="NC_000913.3"/>
</dbReference>
<dbReference type="RefSeq" id="WP_000002953.1">
    <property type="nucleotide sequence ID" value="NZ_STEB01000013.1"/>
</dbReference>
<dbReference type="SMR" id="P0AF90"/>
<dbReference type="BioGRID" id="4263244">
    <property type="interactions" value="13"/>
</dbReference>
<dbReference type="BioGRID" id="853060">
    <property type="interactions" value="3"/>
</dbReference>
<dbReference type="DIP" id="DIP-47905N"/>
<dbReference type="FunCoup" id="P0AF90">
    <property type="interactions" value="274"/>
</dbReference>
<dbReference type="IntAct" id="P0AF90">
    <property type="interactions" value="18"/>
</dbReference>
<dbReference type="STRING" id="511145.b4255"/>
<dbReference type="jPOST" id="P0AF90"/>
<dbReference type="PaxDb" id="511145-b4255"/>
<dbReference type="EnsemblBacteria" id="AAC77212">
    <property type="protein sequence ID" value="AAC77212"/>
    <property type="gene ID" value="b4255"/>
</dbReference>
<dbReference type="GeneID" id="93777567"/>
<dbReference type="GeneID" id="948773"/>
<dbReference type="KEGG" id="ecj:JW4212"/>
<dbReference type="KEGG" id="eco:b4255"/>
<dbReference type="KEGG" id="ecoc:C3026_22955"/>
<dbReference type="PATRIC" id="fig|1411691.4.peg.2449"/>
<dbReference type="EchoBASE" id="EB2347"/>
<dbReference type="eggNOG" id="COG3076">
    <property type="taxonomic scope" value="Bacteria"/>
</dbReference>
<dbReference type="HOGENOM" id="CLU_128640_0_0_6"/>
<dbReference type="InParanoid" id="P0AF90"/>
<dbReference type="OMA" id="IEHHFAS"/>
<dbReference type="OrthoDB" id="7065464at2"/>
<dbReference type="PhylomeDB" id="P0AF90"/>
<dbReference type="BioCyc" id="EcoCyc:G7885-MONOMER"/>
<dbReference type="PRO" id="PR:P0AF90"/>
<dbReference type="Proteomes" id="UP000000625">
    <property type="component" value="Chromosome"/>
</dbReference>
<dbReference type="GO" id="GO:0005829">
    <property type="term" value="C:cytosol"/>
    <property type="evidence" value="ECO:0000314"/>
    <property type="project" value="EcoCyc"/>
</dbReference>
<dbReference type="GO" id="GO:0060698">
    <property type="term" value="F:endoribonuclease inhibitor activity"/>
    <property type="evidence" value="ECO:0000314"/>
    <property type="project" value="UniProtKB"/>
</dbReference>
<dbReference type="GO" id="GO:0019899">
    <property type="term" value="F:enzyme binding"/>
    <property type="evidence" value="ECO:0000353"/>
    <property type="project" value="EcoCyc"/>
</dbReference>
<dbReference type="GO" id="GO:0042803">
    <property type="term" value="F:protein homodimerization activity"/>
    <property type="evidence" value="ECO:0000314"/>
    <property type="project" value="EcoCyc"/>
</dbReference>
<dbReference type="GO" id="GO:0008428">
    <property type="term" value="F:ribonuclease inhibitor activity"/>
    <property type="evidence" value="ECO:0000314"/>
    <property type="project" value="EcoCyc"/>
</dbReference>
<dbReference type="GO" id="GO:0006402">
    <property type="term" value="P:mRNA catabolic process"/>
    <property type="evidence" value="ECO:0000314"/>
    <property type="project" value="EcoCyc"/>
</dbReference>
<dbReference type="GO" id="GO:0060699">
    <property type="term" value="P:regulation of endoribonuclease activity"/>
    <property type="evidence" value="ECO:0000314"/>
    <property type="project" value="UniProtKB"/>
</dbReference>
<dbReference type="FunFam" id="3.30.70.970:FF:000001">
    <property type="entry name" value="Regulator of ribonuclease activity B"/>
    <property type="match status" value="1"/>
</dbReference>
<dbReference type="Gene3D" id="3.30.70.970">
    <property type="entry name" value="RraB-like"/>
    <property type="match status" value="1"/>
</dbReference>
<dbReference type="HAMAP" id="MF_01888">
    <property type="entry name" value="RraB"/>
    <property type="match status" value="1"/>
</dbReference>
<dbReference type="InterPro" id="IPR016716">
    <property type="entry name" value="RraB"/>
</dbReference>
<dbReference type="InterPro" id="IPR036701">
    <property type="entry name" value="RraB-like_sf"/>
</dbReference>
<dbReference type="InterPro" id="IPR009671">
    <property type="entry name" value="RraB_dom"/>
</dbReference>
<dbReference type="NCBIfam" id="NF008393">
    <property type="entry name" value="PRK11191.1"/>
    <property type="match status" value="1"/>
</dbReference>
<dbReference type="Pfam" id="PF06877">
    <property type="entry name" value="RraB"/>
    <property type="match status" value="1"/>
</dbReference>
<dbReference type="PIRSF" id="PIRSF018193">
    <property type="entry name" value="UCP018193"/>
    <property type="match status" value="1"/>
</dbReference>
<dbReference type="SUPFAM" id="SSF89946">
    <property type="entry name" value="Hypothetical protein VC0424"/>
    <property type="match status" value="1"/>
</dbReference>
<comment type="function">
    <text evidence="1 3 4">Globally modulates RNA abundance by binding to RNase E (Rne) and regulating its endonucleolytic activity. Can modulate Rne action in a substrate-dependent manner by altering the composition of the degradosome.</text>
</comment>
<comment type="subunit">
    <text evidence="1 3">Interacts with the C-terminal region of Rne.</text>
</comment>
<comment type="interaction">
    <interactant intactId="EBI-544031">
        <id>P0AF90</id>
    </interactant>
    <interactant intactId="EBI-370029">
        <id>P0AEK4</id>
        <label>fabI</label>
    </interactant>
    <organismsDiffer>false</organismsDiffer>
    <experiments>2</experiments>
</comment>
<comment type="interaction">
    <interactant intactId="EBI-544031">
        <id>P0AF90</id>
    </interactant>
    <interactant intactId="EBI-551053">
        <id>P0A9Z1</id>
        <label>glnB</label>
    </interactant>
    <organismsDiffer>false</organismsDiffer>
    <experiments>3</experiments>
</comment>
<comment type="subcellular location">
    <subcellularLocation>
        <location evidence="1">Cytoplasm</location>
    </subcellularLocation>
</comment>
<comment type="induction">
    <text evidence="5">Constitutively expressed. Expression is increased by a reduction in intracellular concentration of UDP-GlcNAc.</text>
</comment>
<comment type="miscellaneous">
    <text>RraA and RraB interact with Rne at separate sites within the Rne and exert distinct effects on the composition of the degradosome, affecting distinct sets of RNA transcripts.</text>
</comment>
<comment type="similarity">
    <text evidence="1">Belongs to the RraB family.</text>
</comment>
<name>RRAB_ECOLI</name>
<evidence type="ECO:0000255" key="1">
    <source>
        <dbReference type="HAMAP-Rule" id="MF_01888"/>
    </source>
</evidence>
<evidence type="ECO:0000256" key="2">
    <source>
        <dbReference type="SAM" id="MobiDB-lite"/>
    </source>
</evidence>
<evidence type="ECO:0000269" key="3">
    <source>
    </source>
</evidence>
<evidence type="ECO:0000269" key="4">
    <source>
    </source>
</evidence>
<evidence type="ECO:0000269" key="5">
    <source>
    </source>
</evidence>
<accession>P0AF90</accession>
<accession>P37163</accession>
<accession>Q2M654</accession>
<gene>
    <name evidence="1" type="primary">rraB</name>
    <name type="synonym">yjgD</name>
    <name type="ordered locus">b4255</name>
    <name type="ordered locus">JW4212</name>
</gene>
<organism>
    <name type="scientific">Escherichia coli (strain K12)</name>
    <dbReference type="NCBI Taxonomy" id="83333"/>
    <lineage>
        <taxon>Bacteria</taxon>
        <taxon>Pseudomonadati</taxon>
        <taxon>Pseudomonadota</taxon>
        <taxon>Gammaproteobacteria</taxon>
        <taxon>Enterobacterales</taxon>
        <taxon>Enterobacteriaceae</taxon>
        <taxon>Escherichia</taxon>
    </lineage>
</organism>
<keyword id="KW-0963">Cytoplasm</keyword>
<keyword id="KW-1185">Reference proteome</keyword>
<feature type="chain" id="PRO_0000169759" description="Regulator of ribonuclease activity B">
    <location>
        <begin position="1"/>
        <end position="138"/>
    </location>
</feature>
<feature type="region of interest" description="Disordered" evidence="2">
    <location>
        <begin position="114"/>
        <end position="138"/>
    </location>
</feature>
<feature type="compositionally biased region" description="Acidic residues" evidence="2">
    <location>
        <begin position="118"/>
        <end position="138"/>
    </location>
</feature>
<proteinExistence type="evidence at protein level"/>
<sequence>MANPEQLEEQREETRLIIEELLEDGSDPDALYTIEHHLSADDLETLEKAAVEAFKLGYEVTDPEELEVEDGDIVICCDILSECALNADLIDAQVEQLMTLAEKFDVEYDGWGTYFEDPNGEDGDDEDFVDEDDDGVRH</sequence>
<protein>
    <recommendedName>
        <fullName evidence="1">Regulator of ribonuclease activity B</fullName>
    </recommendedName>
</protein>